<keyword id="KW-0175">Coiled coil</keyword>
<keyword id="KW-0963">Cytoplasm</keyword>
<keyword id="KW-0507">mRNA processing</keyword>
<keyword id="KW-0508">mRNA splicing</keyword>
<keyword id="KW-0539">Nucleus</keyword>
<keyword id="KW-1185">Reference proteome</keyword>
<keyword id="KW-0747">Spliceosome</keyword>
<name>CWC26_CANAL</name>
<protein>
    <recommendedName>
        <fullName>Pre-mRNA-splicing factor CWC26</fullName>
    </recommendedName>
</protein>
<reference key="1">
    <citation type="journal article" date="2004" name="Proc. Natl. Acad. Sci. U.S.A.">
        <title>The diploid genome sequence of Candida albicans.</title>
        <authorList>
            <person name="Jones T."/>
            <person name="Federspiel N.A."/>
            <person name="Chibana H."/>
            <person name="Dungan J."/>
            <person name="Kalman S."/>
            <person name="Magee B.B."/>
            <person name="Newport G."/>
            <person name="Thorstenson Y.R."/>
            <person name="Agabian N."/>
            <person name="Magee P.T."/>
            <person name="Davis R.W."/>
            <person name="Scherer S."/>
        </authorList>
    </citation>
    <scope>NUCLEOTIDE SEQUENCE [LARGE SCALE GENOMIC DNA]</scope>
    <source>
        <strain>SC5314 / ATCC MYA-2876</strain>
    </source>
</reference>
<reference key="2">
    <citation type="journal article" date="2007" name="Genome Biol.">
        <title>Assembly of the Candida albicans genome into sixteen supercontigs aligned on the eight chromosomes.</title>
        <authorList>
            <person name="van het Hoog M."/>
            <person name="Rast T.J."/>
            <person name="Martchenko M."/>
            <person name="Grindle S."/>
            <person name="Dignard D."/>
            <person name="Hogues H."/>
            <person name="Cuomo C."/>
            <person name="Berriman M."/>
            <person name="Scherer S."/>
            <person name="Magee B.B."/>
            <person name="Whiteway M."/>
            <person name="Chibana H."/>
            <person name="Nantel A."/>
            <person name="Magee P.T."/>
        </authorList>
    </citation>
    <scope>GENOME REANNOTATION</scope>
    <source>
        <strain>SC5314 / ATCC MYA-2876</strain>
    </source>
</reference>
<reference key="3">
    <citation type="journal article" date="2013" name="Genome Biol.">
        <title>Assembly of a phased diploid Candida albicans genome facilitates allele-specific measurements and provides a simple model for repeat and indel structure.</title>
        <authorList>
            <person name="Muzzey D."/>
            <person name="Schwartz K."/>
            <person name="Weissman J.S."/>
            <person name="Sherlock G."/>
        </authorList>
    </citation>
    <scope>NUCLEOTIDE SEQUENCE [LARGE SCALE GENOMIC DNA]</scope>
    <scope>GENOME REANNOTATION</scope>
    <source>
        <strain>SC5314 / ATCC MYA-2876</strain>
    </source>
</reference>
<evidence type="ECO:0000250" key="1"/>
<evidence type="ECO:0000255" key="2"/>
<evidence type="ECO:0000256" key="3">
    <source>
        <dbReference type="SAM" id="MobiDB-lite"/>
    </source>
</evidence>
<evidence type="ECO:0000305" key="4"/>
<organism>
    <name type="scientific">Candida albicans (strain SC5314 / ATCC MYA-2876)</name>
    <name type="common">Yeast</name>
    <dbReference type="NCBI Taxonomy" id="237561"/>
    <lineage>
        <taxon>Eukaryota</taxon>
        <taxon>Fungi</taxon>
        <taxon>Dikarya</taxon>
        <taxon>Ascomycota</taxon>
        <taxon>Saccharomycotina</taxon>
        <taxon>Pichiomycetes</taxon>
        <taxon>Debaryomycetaceae</taxon>
        <taxon>Candida/Lodderomyces clade</taxon>
        <taxon>Candida</taxon>
    </lineage>
</organism>
<proteinExistence type="inferred from homology"/>
<dbReference type="EMBL" id="CP017623">
    <property type="protein sequence ID" value="AOW26943.1"/>
    <property type="molecule type" value="Genomic_DNA"/>
</dbReference>
<dbReference type="RefSeq" id="XP_722174.2">
    <property type="nucleotide sequence ID" value="XM_717081.2"/>
</dbReference>
<dbReference type="STRING" id="237561.Q5AL13"/>
<dbReference type="EnsemblFungi" id="C1_13380W_A-T">
    <property type="protein sequence ID" value="C1_13380W_A-T-p1"/>
    <property type="gene ID" value="C1_13380W_A"/>
</dbReference>
<dbReference type="GeneID" id="3636217"/>
<dbReference type="KEGG" id="cal:CAALFM_C113380WA"/>
<dbReference type="CGD" id="CAL0000192262">
    <property type="gene designation" value="orf19.12429"/>
</dbReference>
<dbReference type="VEuPathDB" id="FungiDB:C1_13380W_A"/>
<dbReference type="eggNOG" id="KOG2654">
    <property type="taxonomic scope" value="Eukaryota"/>
</dbReference>
<dbReference type="HOGENOM" id="CLU_090706_0_0_1"/>
<dbReference type="InParanoid" id="Q5AL13"/>
<dbReference type="OrthoDB" id="6022at2759"/>
<dbReference type="PRO" id="PR:Q5AL13"/>
<dbReference type="Proteomes" id="UP000000559">
    <property type="component" value="Chromosome 1"/>
</dbReference>
<dbReference type="GO" id="GO:0005737">
    <property type="term" value="C:cytoplasm"/>
    <property type="evidence" value="ECO:0007669"/>
    <property type="project" value="UniProtKB-SubCell"/>
</dbReference>
<dbReference type="GO" id="GO:0005681">
    <property type="term" value="C:spliceosomal complex"/>
    <property type="evidence" value="ECO:0007669"/>
    <property type="project" value="UniProtKB-KW"/>
</dbReference>
<dbReference type="GO" id="GO:0006397">
    <property type="term" value="P:mRNA processing"/>
    <property type="evidence" value="ECO:0007669"/>
    <property type="project" value="UniProtKB-KW"/>
</dbReference>
<dbReference type="GO" id="GO:0008380">
    <property type="term" value="P:RNA splicing"/>
    <property type="evidence" value="ECO:0007669"/>
    <property type="project" value="UniProtKB-KW"/>
</dbReference>
<dbReference type="InterPro" id="IPR018609">
    <property type="entry name" value="Bud13"/>
</dbReference>
<dbReference type="InterPro" id="IPR051112">
    <property type="entry name" value="CWC26_splicing_factor"/>
</dbReference>
<dbReference type="PANTHER" id="PTHR31809">
    <property type="entry name" value="BUD13 HOMOLOG"/>
    <property type="match status" value="1"/>
</dbReference>
<dbReference type="PANTHER" id="PTHR31809:SF0">
    <property type="entry name" value="BUD13 HOMOLOG"/>
    <property type="match status" value="1"/>
</dbReference>
<dbReference type="Pfam" id="PF09736">
    <property type="entry name" value="Bud13"/>
    <property type="match status" value="1"/>
</dbReference>
<gene>
    <name type="primary">CWC26</name>
    <name type="ordered locus">CAALFM_C113380WA</name>
    <name type="ORF">CaO19.12429</name>
    <name type="ORF">CaO19.4964</name>
</gene>
<feature type="chain" id="PRO_0000079599" description="Pre-mRNA-splicing factor CWC26">
    <location>
        <begin position="1"/>
        <end position="281"/>
    </location>
</feature>
<feature type="region of interest" description="Disordered" evidence="3">
    <location>
        <begin position="1"/>
        <end position="68"/>
    </location>
</feature>
<feature type="region of interest" description="Disordered" evidence="3">
    <location>
        <begin position="93"/>
        <end position="123"/>
    </location>
</feature>
<feature type="coiled-coil region" evidence="2">
    <location>
        <begin position="142"/>
        <end position="181"/>
    </location>
</feature>
<feature type="compositionally biased region" description="Basic residues" evidence="3">
    <location>
        <begin position="20"/>
        <end position="29"/>
    </location>
</feature>
<feature type="compositionally biased region" description="Low complexity" evidence="3">
    <location>
        <begin position="100"/>
        <end position="119"/>
    </location>
</feature>
<comment type="function">
    <text evidence="1">Involved in pre-mRNA splicing.</text>
</comment>
<comment type="subunit">
    <text evidence="1">Associated with the spliceosome.</text>
</comment>
<comment type="subcellular location">
    <subcellularLocation>
        <location evidence="1">Cytoplasm</location>
    </subcellularLocation>
    <subcellularLocation>
        <location evidence="1">Nucleus</location>
    </subcellularLocation>
</comment>
<comment type="similarity">
    <text evidence="4">Belongs to the CWC26 family.</text>
</comment>
<sequence>MSKRADYLSKYLNNELSDKPKKKKHKKKSSTTPATSMNIVVETPKPLGVPSIDNNEEYNELNQQTKDNEVDVDEFAPVKLKTTQKSNKGFKRIDNGDIITTNNTTTTTPPPSSLSSSSSVIKPNKLQPNQETIYRDSSGRIINDIKQRQEDLQQQKLHEEQLKQFTEIKTSKQDQINQEQEIFKVKNGHVDNQFEDPMTSFIKDTTTTTKKEFEDVSKSKFVYNKGINIPNRFNIPAGYFWDGIDRSNGFEQMYLRKQTEYNYDKIDSKINETYEIDIGDD</sequence>
<accession>Q5AL13</accession>
<accession>A0A1D8PFM5</accession>